<proteinExistence type="inferred from homology"/>
<gene>
    <name evidence="1" type="primary">nadK</name>
    <name type="ordered locus">NMB0807</name>
</gene>
<feature type="chain" id="PRO_0000120640" description="NAD kinase">
    <location>
        <begin position="1"/>
        <end position="296"/>
    </location>
</feature>
<feature type="active site" description="Proton acceptor" evidence="1">
    <location>
        <position position="78"/>
    </location>
</feature>
<feature type="binding site" evidence="1">
    <location>
        <begin position="78"/>
        <end position="79"/>
    </location>
    <ligand>
        <name>NAD(+)</name>
        <dbReference type="ChEBI" id="CHEBI:57540"/>
    </ligand>
</feature>
<feature type="binding site" evidence="1">
    <location>
        <begin position="152"/>
        <end position="153"/>
    </location>
    <ligand>
        <name>NAD(+)</name>
        <dbReference type="ChEBI" id="CHEBI:57540"/>
    </ligand>
</feature>
<feature type="binding site" evidence="1">
    <location>
        <position position="180"/>
    </location>
    <ligand>
        <name>NAD(+)</name>
        <dbReference type="ChEBI" id="CHEBI:57540"/>
    </ligand>
</feature>
<feature type="binding site" evidence="1">
    <location>
        <position position="182"/>
    </location>
    <ligand>
        <name>NAD(+)</name>
        <dbReference type="ChEBI" id="CHEBI:57540"/>
    </ligand>
</feature>
<feature type="binding site" evidence="1">
    <location>
        <position position="251"/>
    </location>
    <ligand>
        <name>NAD(+)</name>
        <dbReference type="ChEBI" id="CHEBI:57540"/>
    </ligand>
</feature>
<reference key="1">
    <citation type="journal article" date="2000" name="Science">
        <title>Complete genome sequence of Neisseria meningitidis serogroup B strain MC58.</title>
        <authorList>
            <person name="Tettelin H."/>
            <person name="Saunders N.J."/>
            <person name="Heidelberg J.F."/>
            <person name="Jeffries A.C."/>
            <person name="Nelson K.E."/>
            <person name="Eisen J.A."/>
            <person name="Ketchum K.A."/>
            <person name="Hood D.W."/>
            <person name="Peden J.F."/>
            <person name="Dodson R.J."/>
            <person name="Nelson W.C."/>
            <person name="Gwinn M.L."/>
            <person name="DeBoy R.T."/>
            <person name="Peterson J.D."/>
            <person name="Hickey E.K."/>
            <person name="Haft D.H."/>
            <person name="Salzberg S.L."/>
            <person name="White O."/>
            <person name="Fleischmann R.D."/>
            <person name="Dougherty B.A."/>
            <person name="Mason T.M."/>
            <person name="Ciecko A."/>
            <person name="Parksey D.S."/>
            <person name="Blair E."/>
            <person name="Cittone H."/>
            <person name="Clark E.B."/>
            <person name="Cotton M.D."/>
            <person name="Utterback T.R."/>
            <person name="Khouri H.M."/>
            <person name="Qin H."/>
            <person name="Vamathevan J.J."/>
            <person name="Gill J."/>
            <person name="Scarlato V."/>
            <person name="Masignani V."/>
            <person name="Pizza M."/>
            <person name="Grandi G."/>
            <person name="Sun L."/>
            <person name="Smith H.O."/>
            <person name="Fraser C.M."/>
            <person name="Moxon E.R."/>
            <person name="Rappuoli R."/>
            <person name="Venter J.C."/>
        </authorList>
    </citation>
    <scope>NUCLEOTIDE SEQUENCE [LARGE SCALE GENOMIC DNA]</scope>
    <source>
        <strain>ATCC BAA-335 / MC58</strain>
    </source>
</reference>
<keyword id="KW-0067">ATP-binding</keyword>
<keyword id="KW-0963">Cytoplasm</keyword>
<keyword id="KW-0418">Kinase</keyword>
<keyword id="KW-0520">NAD</keyword>
<keyword id="KW-0521">NADP</keyword>
<keyword id="KW-0547">Nucleotide-binding</keyword>
<keyword id="KW-1185">Reference proteome</keyword>
<keyword id="KW-0808">Transferase</keyword>
<comment type="function">
    <text evidence="1">Involved in the regulation of the intracellular balance of NAD and NADP, and is a key enzyme in the biosynthesis of NADP. Catalyzes specifically the phosphorylation on 2'-hydroxyl of the adenosine moiety of NAD to yield NADP.</text>
</comment>
<comment type="catalytic activity">
    <reaction evidence="1">
        <text>NAD(+) + ATP = ADP + NADP(+) + H(+)</text>
        <dbReference type="Rhea" id="RHEA:18629"/>
        <dbReference type="ChEBI" id="CHEBI:15378"/>
        <dbReference type="ChEBI" id="CHEBI:30616"/>
        <dbReference type="ChEBI" id="CHEBI:57540"/>
        <dbReference type="ChEBI" id="CHEBI:58349"/>
        <dbReference type="ChEBI" id="CHEBI:456216"/>
        <dbReference type="EC" id="2.7.1.23"/>
    </reaction>
</comment>
<comment type="cofactor">
    <cofactor evidence="1">
        <name>a divalent metal cation</name>
        <dbReference type="ChEBI" id="CHEBI:60240"/>
    </cofactor>
</comment>
<comment type="subcellular location">
    <subcellularLocation>
        <location evidence="1">Cytoplasm</location>
    </subcellularLocation>
</comment>
<comment type="similarity">
    <text evidence="1">Belongs to the NAD kinase family.</text>
</comment>
<dbReference type="EC" id="2.7.1.23" evidence="1"/>
<dbReference type="EMBL" id="AE002098">
    <property type="protein sequence ID" value="AAF41220.1"/>
    <property type="molecule type" value="Genomic_DNA"/>
</dbReference>
<dbReference type="PIR" id="F81155">
    <property type="entry name" value="F81155"/>
</dbReference>
<dbReference type="RefSeq" id="NP_273849.1">
    <property type="nucleotide sequence ID" value="NC_003112.2"/>
</dbReference>
<dbReference type="RefSeq" id="WP_002213954.1">
    <property type="nucleotide sequence ID" value="NC_003112.2"/>
</dbReference>
<dbReference type="SMR" id="P65773"/>
<dbReference type="FunCoup" id="P65773">
    <property type="interactions" value="486"/>
</dbReference>
<dbReference type="STRING" id="122586.NMB0807"/>
<dbReference type="PaxDb" id="122586-NMB0807"/>
<dbReference type="KEGG" id="nme:NMB0807"/>
<dbReference type="PATRIC" id="fig|122586.8.peg.1019"/>
<dbReference type="HOGENOM" id="CLU_008831_0_1_4"/>
<dbReference type="InParanoid" id="P65773"/>
<dbReference type="OrthoDB" id="9774737at2"/>
<dbReference type="Proteomes" id="UP000000425">
    <property type="component" value="Chromosome"/>
</dbReference>
<dbReference type="GO" id="GO:0005737">
    <property type="term" value="C:cytoplasm"/>
    <property type="evidence" value="ECO:0007669"/>
    <property type="project" value="UniProtKB-SubCell"/>
</dbReference>
<dbReference type="GO" id="GO:0005524">
    <property type="term" value="F:ATP binding"/>
    <property type="evidence" value="ECO:0007669"/>
    <property type="project" value="UniProtKB-KW"/>
</dbReference>
<dbReference type="GO" id="GO:0046872">
    <property type="term" value="F:metal ion binding"/>
    <property type="evidence" value="ECO:0007669"/>
    <property type="project" value="UniProtKB-UniRule"/>
</dbReference>
<dbReference type="GO" id="GO:0051287">
    <property type="term" value="F:NAD binding"/>
    <property type="evidence" value="ECO:0007669"/>
    <property type="project" value="UniProtKB-ARBA"/>
</dbReference>
<dbReference type="GO" id="GO:0003951">
    <property type="term" value="F:NAD+ kinase activity"/>
    <property type="evidence" value="ECO:0000318"/>
    <property type="project" value="GO_Central"/>
</dbReference>
<dbReference type="GO" id="GO:0019674">
    <property type="term" value="P:NAD metabolic process"/>
    <property type="evidence" value="ECO:0007669"/>
    <property type="project" value="InterPro"/>
</dbReference>
<dbReference type="GO" id="GO:0006741">
    <property type="term" value="P:NADP biosynthetic process"/>
    <property type="evidence" value="ECO:0000318"/>
    <property type="project" value="GO_Central"/>
</dbReference>
<dbReference type="FunFam" id="2.60.200.30:FF:000011">
    <property type="entry name" value="NAD kinase"/>
    <property type="match status" value="1"/>
</dbReference>
<dbReference type="Gene3D" id="3.40.50.10330">
    <property type="entry name" value="Probable inorganic polyphosphate/atp-NAD kinase, domain 1"/>
    <property type="match status" value="1"/>
</dbReference>
<dbReference type="Gene3D" id="2.60.200.30">
    <property type="entry name" value="Probable inorganic polyphosphate/atp-NAD kinase, domain 2"/>
    <property type="match status" value="1"/>
</dbReference>
<dbReference type="HAMAP" id="MF_00361">
    <property type="entry name" value="NAD_kinase"/>
    <property type="match status" value="1"/>
</dbReference>
<dbReference type="InterPro" id="IPR017438">
    <property type="entry name" value="ATP-NAD_kinase_N"/>
</dbReference>
<dbReference type="InterPro" id="IPR017437">
    <property type="entry name" value="ATP-NAD_kinase_PpnK-typ_C"/>
</dbReference>
<dbReference type="InterPro" id="IPR016064">
    <property type="entry name" value="NAD/diacylglycerol_kinase_sf"/>
</dbReference>
<dbReference type="InterPro" id="IPR002504">
    <property type="entry name" value="NADK"/>
</dbReference>
<dbReference type="NCBIfam" id="NF002306">
    <property type="entry name" value="PRK01231.1"/>
    <property type="match status" value="1"/>
</dbReference>
<dbReference type="NCBIfam" id="NF003391">
    <property type="entry name" value="PRK04539.1"/>
    <property type="match status" value="1"/>
</dbReference>
<dbReference type="PANTHER" id="PTHR20275">
    <property type="entry name" value="NAD KINASE"/>
    <property type="match status" value="1"/>
</dbReference>
<dbReference type="PANTHER" id="PTHR20275:SF0">
    <property type="entry name" value="NAD KINASE"/>
    <property type="match status" value="1"/>
</dbReference>
<dbReference type="Pfam" id="PF01513">
    <property type="entry name" value="NAD_kinase"/>
    <property type="match status" value="1"/>
</dbReference>
<dbReference type="Pfam" id="PF20143">
    <property type="entry name" value="NAD_kinase_C"/>
    <property type="match status" value="1"/>
</dbReference>
<dbReference type="SUPFAM" id="SSF111331">
    <property type="entry name" value="NAD kinase/diacylglycerol kinase-like"/>
    <property type="match status" value="1"/>
</dbReference>
<name>NADK_NEIMB</name>
<sequence length="296" mass="32853">MNSPFHNIGIVTRPNTPDIQDTAHTLITFLKQHGFTVYLDEVGIKEGCIYTQDTVGCHIVNKTELGQYCDLVAVLGGDGTFLSVAREIALRAVPIIGINQGHLGFLTQIPREYMTDKLLPVLEGKYLAEERILIEAALIREGKTAERAIALNDAVLSRGGAGQMIEFEVFVNREFVYTQRSDGLIVSTPTGSTAYSLAAGGPIMQAGLHAFTLVPICPQSMTNRPIAIPDTSEIEILVTQGGDARVHFDGQTHIDVQNLDRITIRRYRNPLRILHPTDYQYFKTLRQKLHWGEQLV</sequence>
<organism>
    <name type="scientific">Neisseria meningitidis serogroup B (strain ATCC BAA-335 / MC58)</name>
    <dbReference type="NCBI Taxonomy" id="122586"/>
    <lineage>
        <taxon>Bacteria</taxon>
        <taxon>Pseudomonadati</taxon>
        <taxon>Pseudomonadota</taxon>
        <taxon>Betaproteobacteria</taxon>
        <taxon>Neisseriales</taxon>
        <taxon>Neisseriaceae</taxon>
        <taxon>Neisseria</taxon>
    </lineage>
</organism>
<protein>
    <recommendedName>
        <fullName evidence="1">NAD kinase</fullName>
        <ecNumber evidence="1">2.7.1.23</ecNumber>
    </recommendedName>
    <alternativeName>
        <fullName evidence="1">ATP-dependent NAD kinase</fullName>
    </alternativeName>
</protein>
<accession>P65773</accession>
<accession>Q9JQL9</accession>
<evidence type="ECO:0000255" key="1">
    <source>
        <dbReference type="HAMAP-Rule" id="MF_00361"/>
    </source>
</evidence>